<reference key="1">
    <citation type="journal article" date="2005" name="Nature">
        <title>The genome of the social amoeba Dictyostelium discoideum.</title>
        <authorList>
            <person name="Eichinger L."/>
            <person name="Pachebat J.A."/>
            <person name="Gloeckner G."/>
            <person name="Rajandream M.A."/>
            <person name="Sucgang R."/>
            <person name="Berriman M."/>
            <person name="Song J."/>
            <person name="Olsen R."/>
            <person name="Szafranski K."/>
            <person name="Xu Q."/>
            <person name="Tunggal B."/>
            <person name="Kummerfeld S."/>
            <person name="Madera M."/>
            <person name="Konfortov B.A."/>
            <person name="Rivero F."/>
            <person name="Bankier A.T."/>
            <person name="Lehmann R."/>
            <person name="Hamlin N."/>
            <person name="Davies R."/>
            <person name="Gaudet P."/>
            <person name="Fey P."/>
            <person name="Pilcher K."/>
            <person name="Chen G."/>
            <person name="Saunders D."/>
            <person name="Sodergren E.J."/>
            <person name="Davis P."/>
            <person name="Kerhornou A."/>
            <person name="Nie X."/>
            <person name="Hall N."/>
            <person name="Anjard C."/>
            <person name="Hemphill L."/>
            <person name="Bason N."/>
            <person name="Farbrother P."/>
            <person name="Desany B."/>
            <person name="Just E."/>
            <person name="Morio T."/>
            <person name="Rost R."/>
            <person name="Churcher C.M."/>
            <person name="Cooper J."/>
            <person name="Haydock S."/>
            <person name="van Driessche N."/>
            <person name="Cronin A."/>
            <person name="Goodhead I."/>
            <person name="Muzny D.M."/>
            <person name="Mourier T."/>
            <person name="Pain A."/>
            <person name="Lu M."/>
            <person name="Harper D."/>
            <person name="Lindsay R."/>
            <person name="Hauser H."/>
            <person name="James K.D."/>
            <person name="Quiles M."/>
            <person name="Madan Babu M."/>
            <person name="Saito T."/>
            <person name="Buchrieser C."/>
            <person name="Wardroper A."/>
            <person name="Felder M."/>
            <person name="Thangavelu M."/>
            <person name="Johnson D."/>
            <person name="Knights A."/>
            <person name="Loulseged H."/>
            <person name="Mungall K.L."/>
            <person name="Oliver K."/>
            <person name="Price C."/>
            <person name="Quail M.A."/>
            <person name="Urushihara H."/>
            <person name="Hernandez J."/>
            <person name="Rabbinowitsch E."/>
            <person name="Steffen D."/>
            <person name="Sanders M."/>
            <person name="Ma J."/>
            <person name="Kohara Y."/>
            <person name="Sharp S."/>
            <person name="Simmonds M.N."/>
            <person name="Spiegler S."/>
            <person name="Tivey A."/>
            <person name="Sugano S."/>
            <person name="White B."/>
            <person name="Walker D."/>
            <person name="Woodward J.R."/>
            <person name="Winckler T."/>
            <person name="Tanaka Y."/>
            <person name="Shaulsky G."/>
            <person name="Schleicher M."/>
            <person name="Weinstock G.M."/>
            <person name="Rosenthal A."/>
            <person name="Cox E.C."/>
            <person name="Chisholm R.L."/>
            <person name="Gibbs R.A."/>
            <person name="Loomis W.F."/>
            <person name="Platzer M."/>
            <person name="Kay R.R."/>
            <person name="Williams J.G."/>
            <person name="Dear P.H."/>
            <person name="Noegel A.A."/>
            <person name="Barrell B.G."/>
            <person name="Kuspa A."/>
        </authorList>
    </citation>
    <scope>NUCLEOTIDE SEQUENCE [LARGE SCALE GENOMIC DNA]</scope>
    <source>
        <strain>AX4</strain>
    </source>
</reference>
<reference key="2">
    <citation type="journal article" date="1993" name="J. Struct. Biol.">
        <title>Proteasomes from Dictyostelium discoideum: characterization of structure and function.</title>
        <authorList>
            <person name="Schauer T.M."/>
            <person name="Nesper M."/>
            <person name="Kehl M."/>
            <person name="Lottspeich F."/>
            <person name="Mueller-Taubenberger A."/>
            <person name="Gerisch G."/>
            <person name="Baumeister W."/>
        </authorList>
    </citation>
    <scope>IDENTIFICATION IN THE PROTEASOME COMPLEX</scope>
</reference>
<feature type="propeptide" id="PRO_0000327484" description="Removed in mature form" evidence="1">
    <location>
        <begin position="1"/>
        <end position="62"/>
    </location>
</feature>
<feature type="chain" id="PRO_0000327485" description="Proteasome subunit beta type-5">
    <location>
        <begin position="63"/>
        <end position="272"/>
    </location>
</feature>
<feature type="active site" description="Nucleophile" evidence="1">
    <location>
        <position position="63"/>
    </location>
</feature>
<proteinExistence type="evidence at protein level"/>
<organism>
    <name type="scientific">Dictyostelium discoideum</name>
    <name type="common">Social amoeba</name>
    <dbReference type="NCBI Taxonomy" id="44689"/>
    <lineage>
        <taxon>Eukaryota</taxon>
        <taxon>Amoebozoa</taxon>
        <taxon>Evosea</taxon>
        <taxon>Eumycetozoa</taxon>
        <taxon>Dictyostelia</taxon>
        <taxon>Dictyosteliales</taxon>
        <taxon>Dictyosteliaceae</taxon>
        <taxon>Dictyostelium</taxon>
    </lineage>
</organism>
<accession>Q54BC8</accession>
<keyword id="KW-0963">Cytoplasm</keyword>
<keyword id="KW-0378">Hydrolase</keyword>
<keyword id="KW-0539">Nucleus</keyword>
<keyword id="KW-0645">Protease</keyword>
<keyword id="KW-0647">Proteasome</keyword>
<keyword id="KW-1185">Reference proteome</keyword>
<keyword id="KW-0888">Threonine protease</keyword>
<keyword id="KW-0865">Zymogen</keyword>
<protein>
    <recommendedName>
        <fullName>Proteasome subunit beta type-5</fullName>
        <ecNumber>3.4.25.1</ecNumber>
    </recommendedName>
</protein>
<name>PSB5_DICDI</name>
<comment type="function">
    <text evidence="1">The proteasome is a multicatalytic proteinase complex which is characterized by its ability to cleave peptides with Arg, Phe, Tyr, Leu, and Glu adjacent to the leaving group at neutral or slightly basic pH. The proteasome has an ATP-dependent proteolytic activity (By similarity).</text>
</comment>
<comment type="catalytic activity">
    <reaction>
        <text>Cleavage of peptide bonds with very broad specificity.</text>
        <dbReference type="EC" id="3.4.25.1"/>
    </reaction>
</comment>
<comment type="subunit">
    <text evidence="3">The 26S proteasome consists of a 20S proteasome core and two 19S regulatory subunits. The 20S proteasome core is composed of 28 subunits that are arranged in four stacked rings, resulting in a barrel-shaped structure. The two end rings are each formed by seven alpha subunits, and the two central rings are each formed by seven beta subunits. The catalytic chamber with the active sites is on the inside of the barrel.</text>
</comment>
<comment type="subcellular location">
    <subcellularLocation>
        <location evidence="2">Cytoplasm</location>
    </subcellularLocation>
    <subcellularLocation>
        <location evidence="1">Nucleus</location>
    </subcellularLocation>
</comment>
<comment type="similarity">
    <text evidence="2">Belongs to the peptidase T1B family.</text>
</comment>
<gene>
    <name type="primary">psmB5</name>
    <name type="ORF">DDB_G0293784</name>
</gene>
<sequence>MINIDFDNIEQSQPTLYDTLASDVKFLNTPHFELPPNANPGDFLRETFDHPSAPKALEFAHGTTTLAFVYGGGIIVSVDSKSTQGPYVASRSVKKVIEITPTLLGTMAGGAADCSFWERELGRRCRLYELRNKELISVAAASKILANIVYSYKGYGLSMGTMITGWDKTGPQLYYVDNDGTRLHGQRFSCGSGSTYAYGVLDTGFKWDMNDEEAYELGRRAVYHATHRDAYSGGAINVYHVQKDGWKKISSDDCFKLYQKYYNIVPINKPAN</sequence>
<dbReference type="EC" id="3.4.25.1"/>
<dbReference type="EMBL" id="AAFI02000219">
    <property type="protein sequence ID" value="EAL60569.1"/>
    <property type="molecule type" value="Genomic_DNA"/>
</dbReference>
<dbReference type="RefSeq" id="XP_628966.1">
    <property type="nucleotide sequence ID" value="XM_628964.1"/>
</dbReference>
<dbReference type="SMR" id="Q54BC8"/>
<dbReference type="FunCoup" id="Q54BC8">
    <property type="interactions" value="584"/>
</dbReference>
<dbReference type="STRING" id="44689.Q54BC8"/>
<dbReference type="MEROPS" id="T01.012"/>
<dbReference type="PaxDb" id="44689-DDB0232959"/>
<dbReference type="EnsemblProtists" id="EAL60569">
    <property type="protein sequence ID" value="EAL60569"/>
    <property type="gene ID" value="DDB_G0293784"/>
</dbReference>
<dbReference type="GeneID" id="8629394"/>
<dbReference type="KEGG" id="ddi:DDB_G0293784"/>
<dbReference type="dictyBase" id="DDB_G0293784">
    <property type="gene designation" value="psmB5"/>
</dbReference>
<dbReference type="VEuPathDB" id="AmoebaDB:DDB_G0293784"/>
<dbReference type="eggNOG" id="KOG0175">
    <property type="taxonomic scope" value="Eukaryota"/>
</dbReference>
<dbReference type="HOGENOM" id="CLU_035750_7_0_1"/>
<dbReference type="InParanoid" id="Q54BC8"/>
<dbReference type="OMA" id="NLGMAMQ"/>
<dbReference type="PhylomeDB" id="Q54BC8"/>
<dbReference type="Reactome" id="R-DDI-1236978">
    <property type="pathway name" value="Cross-presentation of soluble exogenous antigens (endosomes)"/>
</dbReference>
<dbReference type="Reactome" id="R-DDI-174084">
    <property type="pathway name" value="Autodegradation of Cdh1 by Cdh1:APC/C"/>
</dbReference>
<dbReference type="Reactome" id="R-DDI-174154">
    <property type="pathway name" value="APC/C:Cdc20 mediated degradation of Securin"/>
</dbReference>
<dbReference type="Reactome" id="R-DDI-174178">
    <property type="pathway name" value="APC/C:Cdh1 mediated degradation of Cdc20 and other APC/C:Cdh1 targeted proteins in late mitosis/early G1"/>
</dbReference>
<dbReference type="Reactome" id="R-DDI-2467813">
    <property type="pathway name" value="Separation of Sister Chromatids"/>
</dbReference>
<dbReference type="Reactome" id="R-DDI-349425">
    <property type="pathway name" value="Autodegradation of the E3 ubiquitin ligase COP1"/>
</dbReference>
<dbReference type="Reactome" id="R-DDI-382556">
    <property type="pathway name" value="ABC-family proteins mediated transport"/>
</dbReference>
<dbReference type="Reactome" id="R-DDI-450408">
    <property type="pathway name" value="AUF1 (hnRNP D0) binds and destabilizes mRNA"/>
</dbReference>
<dbReference type="Reactome" id="R-DDI-4641258">
    <property type="pathway name" value="Degradation of DVL"/>
</dbReference>
<dbReference type="Reactome" id="R-DDI-5632684">
    <property type="pathway name" value="Hedgehog 'on' state"/>
</dbReference>
<dbReference type="Reactome" id="R-DDI-5658442">
    <property type="pathway name" value="Regulation of RAS by GAPs"/>
</dbReference>
<dbReference type="Reactome" id="R-DDI-5687128">
    <property type="pathway name" value="MAPK6/MAPK4 signaling"/>
</dbReference>
<dbReference type="Reactome" id="R-DDI-5689603">
    <property type="pathway name" value="UCH proteinases"/>
</dbReference>
<dbReference type="Reactome" id="R-DDI-5689880">
    <property type="pathway name" value="Ub-specific processing proteases"/>
</dbReference>
<dbReference type="Reactome" id="R-DDI-68949">
    <property type="pathway name" value="Orc1 removal from chromatin"/>
</dbReference>
<dbReference type="Reactome" id="R-DDI-69017">
    <property type="pathway name" value="CDK-mediated phosphorylation and removal of Cdc6"/>
</dbReference>
<dbReference type="Reactome" id="R-DDI-69601">
    <property type="pathway name" value="Ubiquitin Mediated Degradation of Phosphorylated Cdc25A"/>
</dbReference>
<dbReference type="Reactome" id="R-DDI-8854050">
    <property type="pathway name" value="FBXL7 down-regulates AURKA during mitotic entry and in early mitosis"/>
</dbReference>
<dbReference type="Reactome" id="R-DDI-8948751">
    <property type="pathway name" value="Regulation of PTEN stability and activity"/>
</dbReference>
<dbReference type="Reactome" id="R-DDI-8951664">
    <property type="pathway name" value="Neddylation"/>
</dbReference>
<dbReference type="Reactome" id="R-DDI-9755511">
    <property type="pathway name" value="KEAP1-NFE2L2 pathway"/>
</dbReference>
<dbReference type="Reactome" id="R-DDI-983168">
    <property type="pathway name" value="Antigen processing: Ubiquitination &amp; Proteasome degradation"/>
</dbReference>
<dbReference type="Reactome" id="R-DDI-9907900">
    <property type="pathway name" value="Proteasome assembly"/>
</dbReference>
<dbReference type="PRO" id="PR:Q54BC8"/>
<dbReference type="Proteomes" id="UP000002195">
    <property type="component" value="Chromosome 6"/>
</dbReference>
<dbReference type="GO" id="GO:0005737">
    <property type="term" value="C:cytoplasm"/>
    <property type="evidence" value="ECO:0000353"/>
    <property type="project" value="dictyBase"/>
</dbReference>
<dbReference type="GO" id="GO:0005829">
    <property type="term" value="C:cytosol"/>
    <property type="evidence" value="ECO:0000318"/>
    <property type="project" value="GO_Central"/>
</dbReference>
<dbReference type="GO" id="GO:0005634">
    <property type="term" value="C:nucleus"/>
    <property type="evidence" value="ECO:0000353"/>
    <property type="project" value="dictyBase"/>
</dbReference>
<dbReference type="GO" id="GO:0019774">
    <property type="term" value="C:proteasome core complex, beta-subunit complex"/>
    <property type="evidence" value="ECO:0000314"/>
    <property type="project" value="dictyBase"/>
</dbReference>
<dbReference type="GO" id="GO:0004175">
    <property type="term" value="F:endopeptidase activity"/>
    <property type="evidence" value="ECO:0000314"/>
    <property type="project" value="dictyBase"/>
</dbReference>
<dbReference type="GO" id="GO:0004298">
    <property type="term" value="F:threonine-type endopeptidase activity"/>
    <property type="evidence" value="ECO:0007669"/>
    <property type="project" value="UniProtKB-KW"/>
</dbReference>
<dbReference type="GO" id="GO:0010498">
    <property type="term" value="P:proteasomal protein catabolic process"/>
    <property type="evidence" value="ECO:0000314"/>
    <property type="project" value="dictyBase"/>
</dbReference>
<dbReference type="GO" id="GO:0043161">
    <property type="term" value="P:proteasome-mediated ubiquitin-dependent protein catabolic process"/>
    <property type="evidence" value="ECO:0000318"/>
    <property type="project" value="GO_Central"/>
</dbReference>
<dbReference type="CDD" id="cd03761">
    <property type="entry name" value="proteasome_beta_type_5"/>
    <property type="match status" value="1"/>
</dbReference>
<dbReference type="FunFam" id="3.60.20.10:FF:000156">
    <property type="match status" value="1"/>
</dbReference>
<dbReference type="Gene3D" id="3.60.20.10">
    <property type="entry name" value="Glutamine Phosphoribosylpyrophosphate, subunit 1, domain 1"/>
    <property type="match status" value="1"/>
</dbReference>
<dbReference type="InterPro" id="IPR029055">
    <property type="entry name" value="Ntn_hydrolases_N"/>
</dbReference>
<dbReference type="InterPro" id="IPR000243">
    <property type="entry name" value="Pept_T1A_subB"/>
</dbReference>
<dbReference type="InterPro" id="IPR001353">
    <property type="entry name" value="Proteasome_sua/b"/>
</dbReference>
<dbReference type="InterPro" id="IPR023333">
    <property type="entry name" value="Proteasome_suB-type"/>
</dbReference>
<dbReference type="PANTHER" id="PTHR32194">
    <property type="entry name" value="METALLOPROTEASE TLDD"/>
    <property type="match status" value="1"/>
</dbReference>
<dbReference type="PANTHER" id="PTHR32194:SF3">
    <property type="entry name" value="PROTEASOME SUBUNIT BETA"/>
    <property type="match status" value="1"/>
</dbReference>
<dbReference type="Pfam" id="PF00227">
    <property type="entry name" value="Proteasome"/>
    <property type="match status" value="1"/>
</dbReference>
<dbReference type="PRINTS" id="PR00141">
    <property type="entry name" value="PROTEASOME"/>
</dbReference>
<dbReference type="SUPFAM" id="SSF56235">
    <property type="entry name" value="N-terminal nucleophile aminohydrolases (Ntn hydrolases)"/>
    <property type="match status" value="1"/>
</dbReference>
<dbReference type="PROSITE" id="PS51476">
    <property type="entry name" value="PROTEASOME_BETA_2"/>
    <property type="match status" value="1"/>
</dbReference>
<evidence type="ECO:0000250" key="1"/>
<evidence type="ECO:0000255" key="2">
    <source>
        <dbReference type="PROSITE-ProRule" id="PRU00809"/>
    </source>
</evidence>
<evidence type="ECO:0000269" key="3">
    <source>
    </source>
</evidence>